<name>SYGB_EDWI9</name>
<keyword id="KW-0030">Aminoacyl-tRNA synthetase</keyword>
<keyword id="KW-0067">ATP-binding</keyword>
<keyword id="KW-0963">Cytoplasm</keyword>
<keyword id="KW-0436">Ligase</keyword>
<keyword id="KW-0547">Nucleotide-binding</keyword>
<keyword id="KW-0648">Protein biosynthesis</keyword>
<protein>
    <recommendedName>
        <fullName evidence="1">Glycine--tRNA ligase beta subunit</fullName>
        <ecNumber evidence="1">6.1.1.14</ecNumber>
    </recommendedName>
    <alternativeName>
        <fullName evidence="1">Glycyl-tRNA synthetase beta subunit</fullName>
        <shortName evidence="1">GlyRS</shortName>
    </alternativeName>
</protein>
<comment type="catalytic activity">
    <reaction evidence="1">
        <text>tRNA(Gly) + glycine + ATP = glycyl-tRNA(Gly) + AMP + diphosphate</text>
        <dbReference type="Rhea" id="RHEA:16013"/>
        <dbReference type="Rhea" id="RHEA-COMP:9664"/>
        <dbReference type="Rhea" id="RHEA-COMP:9683"/>
        <dbReference type="ChEBI" id="CHEBI:30616"/>
        <dbReference type="ChEBI" id="CHEBI:33019"/>
        <dbReference type="ChEBI" id="CHEBI:57305"/>
        <dbReference type="ChEBI" id="CHEBI:78442"/>
        <dbReference type="ChEBI" id="CHEBI:78522"/>
        <dbReference type="ChEBI" id="CHEBI:456215"/>
        <dbReference type="EC" id="6.1.1.14"/>
    </reaction>
</comment>
<comment type="subunit">
    <text evidence="1">Tetramer of two alpha and two beta subunits.</text>
</comment>
<comment type="subcellular location">
    <subcellularLocation>
        <location evidence="1">Cytoplasm</location>
    </subcellularLocation>
</comment>
<comment type="similarity">
    <text evidence="1">Belongs to the class-II aminoacyl-tRNA synthetase family.</text>
</comment>
<gene>
    <name evidence="1" type="primary">glyS</name>
    <name type="ordered locus">NT01EI_0014</name>
</gene>
<proteinExistence type="inferred from homology"/>
<sequence>MTQQTFLVEIGTEELPPKALRSLAQAFADNFRTELDNAGLAHGDIEWFAAPRRLALKVAALNAAQPDREIEKRGPAIAQAFDAEGKPTKAAEGWARGCGISVDQAERLSTDKGEWLLYRALQKGQRAQDLLPALVASALSRLPIPKLMRWGDSDTQFVRPVHTVTLLLGSESIPATILGVPSDRVIRGHRFMGEAEFTLDSADQYPQILLERGKVIADYDARKALIKRDAEAAAARIGGVADLSDSLLEEVTSLVEWPVVLTARFEEKFLAVPAEALVYTMKGDQKYFPVYDAAGKLLPNFIFVANIDSKDAQQIIAGNEKVVRPRLADAEFFFKTDRKQRLEDNLPRLESVLFQQQLGSLRDKTDRITALAGWIAQQIGADVNMATRAGLLSKCDLMTNMVFEFTDTQGVMGMHYARHDGEAEEVAVALNEQYMPRFAGDALPTSLVACAVAIADKMDTLAGIFGIGQHPKGDKDPFALRRAALGVLRIVVEKKLPLDLLTLTQEAVRLYGDKLGNASVVDDVVEFMLGRFRAWYQEEGHAVDTIQAVLARRPTRPADFDARVRAVSHFRTLPEAATLAAANKRVSNILAKSGDVLAEQVQAVLLKEPAEIRLAANLITLQEKLAPLFADGRYQEALVELATLRQPVDDFFEQVMVMADDEQVRINRLTLLNKLRDLFLQVADISVLQ</sequence>
<organism>
    <name type="scientific">Edwardsiella ictaluri (strain 93-146)</name>
    <dbReference type="NCBI Taxonomy" id="634503"/>
    <lineage>
        <taxon>Bacteria</taxon>
        <taxon>Pseudomonadati</taxon>
        <taxon>Pseudomonadota</taxon>
        <taxon>Gammaproteobacteria</taxon>
        <taxon>Enterobacterales</taxon>
        <taxon>Hafniaceae</taxon>
        <taxon>Edwardsiella</taxon>
    </lineage>
</organism>
<evidence type="ECO:0000255" key="1">
    <source>
        <dbReference type="HAMAP-Rule" id="MF_00255"/>
    </source>
</evidence>
<accession>C5B995</accession>
<reference key="1">
    <citation type="submission" date="2009-03" db="EMBL/GenBank/DDBJ databases">
        <title>Complete genome sequence of Edwardsiella ictaluri 93-146.</title>
        <authorList>
            <person name="Williams M.L."/>
            <person name="Gillaspy A.F."/>
            <person name="Dyer D.W."/>
            <person name="Thune R.L."/>
            <person name="Waldbieser G.C."/>
            <person name="Schuster S.C."/>
            <person name="Gipson J."/>
            <person name="Zaitshik J."/>
            <person name="Landry C."/>
            <person name="Lawrence M.L."/>
        </authorList>
    </citation>
    <scope>NUCLEOTIDE SEQUENCE [LARGE SCALE GENOMIC DNA]</scope>
    <source>
        <strain>93-146</strain>
    </source>
</reference>
<feature type="chain" id="PRO_1000204604" description="Glycine--tRNA ligase beta subunit">
    <location>
        <begin position="1"/>
        <end position="689"/>
    </location>
</feature>
<dbReference type="EC" id="6.1.1.14" evidence="1"/>
<dbReference type="EMBL" id="CP001600">
    <property type="protein sequence ID" value="ACR67275.1"/>
    <property type="molecule type" value="Genomic_DNA"/>
</dbReference>
<dbReference type="RefSeq" id="WP_015869500.1">
    <property type="nucleotide sequence ID" value="NZ_CP169062.1"/>
</dbReference>
<dbReference type="SMR" id="C5B995"/>
<dbReference type="STRING" id="67780.B6E78_11250"/>
<dbReference type="GeneID" id="69537132"/>
<dbReference type="KEGG" id="eic:NT01EI_0014"/>
<dbReference type="PATRIC" id="fig|634503.3.peg.12"/>
<dbReference type="HOGENOM" id="CLU_007220_2_2_6"/>
<dbReference type="OrthoDB" id="9775440at2"/>
<dbReference type="Proteomes" id="UP000001485">
    <property type="component" value="Chromosome"/>
</dbReference>
<dbReference type="GO" id="GO:0005829">
    <property type="term" value="C:cytosol"/>
    <property type="evidence" value="ECO:0007669"/>
    <property type="project" value="TreeGrafter"/>
</dbReference>
<dbReference type="GO" id="GO:0004814">
    <property type="term" value="F:arginine-tRNA ligase activity"/>
    <property type="evidence" value="ECO:0007669"/>
    <property type="project" value="InterPro"/>
</dbReference>
<dbReference type="GO" id="GO:0005524">
    <property type="term" value="F:ATP binding"/>
    <property type="evidence" value="ECO:0007669"/>
    <property type="project" value="UniProtKB-UniRule"/>
</dbReference>
<dbReference type="GO" id="GO:0004820">
    <property type="term" value="F:glycine-tRNA ligase activity"/>
    <property type="evidence" value="ECO:0007669"/>
    <property type="project" value="UniProtKB-UniRule"/>
</dbReference>
<dbReference type="GO" id="GO:0006420">
    <property type="term" value="P:arginyl-tRNA aminoacylation"/>
    <property type="evidence" value="ECO:0007669"/>
    <property type="project" value="InterPro"/>
</dbReference>
<dbReference type="GO" id="GO:0006426">
    <property type="term" value="P:glycyl-tRNA aminoacylation"/>
    <property type="evidence" value="ECO:0007669"/>
    <property type="project" value="UniProtKB-UniRule"/>
</dbReference>
<dbReference type="HAMAP" id="MF_00255">
    <property type="entry name" value="Gly_tRNA_synth_beta"/>
    <property type="match status" value="1"/>
</dbReference>
<dbReference type="InterPro" id="IPR008909">
    <property type="entry name" value="DALR_anticod-bd"/>
</dbReference>
<dbReference type="InterPro" id="IPR015944">
    <property type="entry name" value="Gly-tRNA-synth_bsu"/>
</dbReference>
<dbReference type="InterPro" id="IPR006194">
    <property type="entry name" value="Gly-tRNA-synth_heterodimer"/>
</dbReference>
<dbReference type="NCBIfam" id="TIGR00211">
    <property type="entry name" value="glyS"/>
    <property type="match status" value="1"/>
</dbReference>
<dbReference type="PANTHER" id="PTHR30075:SF2">
    <property type="entry name" value="GLYCINE--TRNA LIGASE, CHLOROPLASTIC_MITOCHONDRIAL 2"/>
    <property type="match status" value="1"/>
</dbReference>
<dbReference type="PANTHER" id="PTHR30075">
    <property type="entry name" value="GLYCYL-TRNA SYNTHETASE"/>
    <property type="match status" value="1"/>
</dbReference>
<dbReference type="Pfam" id="PF05746">
    <property type="entry name" value="DALR_1"/>
    <property type="match status" value="1"/>
</dbReference>
<dbReference type="Pfam" id="PF02092">
    <property type="entry name" value="tRNA_synt_2f"/>
    <property type="match status" value="1"/>
</dbReference>
<dbReference type="PRINTS" id="PR01045">
    <property type="entry name" value="TRNASYNTHGB"/>
</dbReference>
<dbReference type="SUPFAM" id="SSF109604">
    <property type="entry name" value="HD-domain/PDEase-like"/>
    <property type="match status" value="1"/>
</dbReference>
<dbReference type="PROSITE" id="PS50861">
    <property type="entry name" value="AA_TRNA_LIGASE_II_GLYAB"/>
    <property type="match status" value="1"/>
</dbReference>